<organism>
    <name type="scientific">Dichelobacter nodosus (strain VCS1703A)</name>
    <dbReference type="NCBI Taxonomy" id="246195"/>
    <lineage>
        <taxon>Bacteria</taxon>
        <taxon>Pseudomonadati</taxon>
        <taxon>Pseudomonadota</taxon>
        <taxon>Gammaproteobacteria</taxon>
        <taxon>Cardiobacteriales</taxon>
        <taxon>Cardiobacteriaceae</taxon>
        <taxon>Dichelobacter</taxon>
    </lineage>
</organism>
<name>ACKA_DICNV</name>
<keyword id="KW-0067">ATP-binding</keyword>
<keyword id="KW-0963">Cytoplasm</keyword>
<keyword id="KW-0418">Kinase</keyword>
<keyword id="KW-0460">Magnesium</keyword>
<keyword id="KW-0479">Metal-binding</keyword>
<keyword id="KW-0547">Nucleotide-binding</keyword>
<keyword id="KW-1185">Reference proteome</keyword>
<keyword id="KW-0808">Transferase</keyword>
<proteinExistence type="inferred from homology"/>
<evidence type="ECO:0000255" key="1">
    <source>
        <dbReference type="HAMAP-Rule" id="MF_00020"/>
    </source>
</evidence>
<protein>
    <recommendedName>
        <fullName evidence="1">Acetate kinase</fullName>
        <ecNumber evidence="1">2.7.2.1</ecNumber>
    </recommendedName>
    <alternativeName>
        <fullName evidence="1">Acetokinase</fullName>
    </alternativeName>
</protein>
<gene>
    <name evidence="1" type="primary">ackA</name>
    <name type="ordered locus">DNO_0447</name>
</gene>
<dbReference type="EC" id="2.7.2.1" evidence="1"/>
<dbReference type="EMBL" id="CP000513">
    <property type="protein sequence ID" value="ABQ13779.1"/>
    <property type="molecule type" value="Genomic_DNA"/>
</dbReference>
<dbReference type="RefSeq" id="WP_012030785.1">
    <property type="nucleotide sequence ID" value="NC_009446.1"/>
</dbReference>
<dbReference type="SMR" id="A5EVU0"/>
<dbReference type="STRING" id="246195.DNO_0447"/>
<dbReference type="KEGG" id="dno:DNO_0447"/>
<dbReference type="eggNOG" id="COG0282">
    <property type="taxonomic scope" value="Bacteria"/>
</dbReference>
<dbReference type="HOGENOM" id="CLU_020352_0_1_6"/>
<dbReference type="OrthoDB" id="9802453at2"/>
<dbReference type="UniPathway" id="UPA00340">
    <property type="reaction ID" value="UER00458"/>
</dbReference>
<dbReference type="Proteomes" id="UP000000248">
    <property type="component" value="Chromosome"/>
</dbReference>
<dbReference type="GO" id="GO:0005829">
    <property type="term" value="C:cytosol"/>
    <property type="evidence" value="ECO:0007669"/>
    <property type="project" value="TreeGrafter"/>
</dbReference>
<dbReference type="GO" id="GO:0008776">
    <property type="term" value="F:acetate kinase activity"/>
    <property type="evidence" value="ECO:0007669"/>
    <property type="project" value="UniProtKB-UniRule"/>
</dbReference>
<dbReference type="GO" id="GO:0005524">
    <property type="term" value="F:ATP binding"/>
    <property type="evidence" value="ECO:0007669"/>
    <property type="project" value="UniProtKB-KW"/>
</dbReference>
<dbReference type="GO" id="GO:0000287">
    <property type="term" value="F:magnesium ion binding"/>
    <property type="evidence" value="ECO:0007669"/>
    <property type="project" value="UniProtKB-UniRule"/>
</dbReference>
<dbReference type="GO" id="GO:0006083">
    <property type="term" value="P:acetate metabolic process"/>
    <property type="evidence" value="ECO:0007669"/>
    <property type="project" value="TreeGrafter"/>
</dbReference>
<dbReference type="GO" id="GO:0006085">
    <property type="term" value="P:acetyl-CoA biosynthetic process"/>
    <property type="evidence" value="ECO:0007669"/>
    <property type="project" value="UniProtKB-UniRule"/>
</dbReference>
<dbReference type="CDD" id="cd24010">
    <property type="entry name" value="ASKHA_NBD_AcK_PK"/>
    <property type="match status" value="1"/>
</dbReference>
<dbReference type="Gene3D" id="3.30.420.40">
    <property type="match status" value="2"/>
</dbReference>
<dbReference type="HAMAP" id="MF_00020">
    <property type="entry name" value="Acetate_kinase"/>
    <property type="match status" value="1"/>
</dbReference>
<dbReference type="InterPro" id="IPR004372">
    <property type="entry name" value="Ac/propionate_kinase"/>
</dbReference>
<dbReference type="InterPro" id="IPR000890">
    <property type="entry name" value="Aliphatic_acid_kin_short-chain"/>
</dbReference>
<dbReference type="InterPro" id="IPR023865">
    <property type="entry name" value="Aliphatic_acid_kinase_CS"/>
</dbReference>
<dbReference type="InterPro" id="IPR043129">
    <property type="entry name" value="ATPase_NBD"/>
</dbReference>
<dbReference type="NCBIfam" id="TIGR00016">
    <property type="entry name" value="ackA"/>
    <property type="match status" value="1"/>
</dbReference>
<dbReference type="PANTHER" id="PTHR21060">
    <property type="entry name" value="ACETATE KINASE"/>
    <property type="match status" value="1"/>
</dbReference>
<dbReference type="PANTHER" id="PTHR21060:SF21">
    <property type="entry name" value="ACETATE KINASE"/>
    <property type="match status" value="1"/>
</dbReference>
<dbReference type="Pfam" id="PF00871">
    <property type="entry name" value="Acetate_kinase"/>
    <property type="match status" value="1"/>
</dbReference>
<dbReference type="PIRSF" id="PIRSF000722">
    <property type="entry name" value="Acetate_prop_kin"/>
    <property type="match status" value="1"/>
</dbReference>
<dbReference type="PRINTS" id="PR00471">
    <property type="entry name" value="ACETATEKNASE"/>
</dbReference>
<dbReference type="SUPFAM" id="SSF53067">
    <property type="entry name" value="Actin-like ATPase domain"/>
    <property type="match status" value="2"/>
</dbReference>
<dbReference type="PROSITE" id="PS01075">
    <property type="entry name" value="ACETATE_KINASE_1"/>
    <property type="match status" value="1"/>
</dbReference>
<dbReference type="PROSITE" id="PS01076">
    <property type="entry name" value="ACETATE_KINASE_2"/>
    <property type="match status" value="1"/>
</dbReference>
<accession>A5EVU0</accession>
<comment type="function">
    <text evidence="1">Catalyzes the formation of acetyl phosphate from acetate and ATP. Can also catalyze the reverse reaction.</text>
</comment>
<comment type="catalytic activity">
    <reaction evidence="1">
        <text>acetate + ATP = acetyl phosphate + ADP</text>
        <dbReference type="Rhea" id="RHEA:11352"/>
        <dbReference type="ChEBI" id="CHEBI:22191"/>
        <dbReference type="ChEBI" id="CHEBI:30089"/>
        <dbReference type="ChEBI" id="CHEBI:30616"/>
        <dbReference type="ChEBI" id="CHEBI:456216"/>
        <dbReference type="EC" id="2.7.2.1"/>
    </reaction>
</comment>
<comment type="cofactor">
    <cofactor evidence="1">
        <name>Mg(2+)</name>
        <dbReference type="ChEBI" id="CHEBI:18420"/>
    </cofactor>
    <cofactor evidence="1">
        <name>Mn(2+)</name>
        <dbReference type="ChEBI" id="CHEBI:29035"/>
    </cofactor>
    <text evidence="1">Mg(2+). Can also accept Mn(2+).</text>
</comment>
<comment type="pathway">
    <text evidence="1">Metabolic intermediate biosynthesis; acetyl-CoA biosynthesis; acetyl-CoA from acetate: step 1/2.</text>
</comment>
<comment type="subunit">
    <text evidence="1">Homodimer.</text>
</comment>
<comment type="subcellular location">
    <subcellularLocation>
        <location evidence="1">Cytoplasm</location>
    </subcellularLocation>
</comment>
<comment type="similarity">
    <text evidence="1">Belongs to the acetokinase family.</text>
</comment>
<feature type="chain" id="PRO_1000057185" description="Acetate kinase">
    <location>
        <begin position="1"/>
        <end position="394"/>
    </location>
</feature>
<feature type="active site" description="Proton donor/acceptor" evidence="1">
    <location>
        <position position="143"/>
    </location>
</feature>
<feature type="binding site" evidence="1">
    <location>
        <position position="8"/>
    </location>
    <ligand>
        <name>Mg(2+)</name>
        <dbReference type="ChEBI" id="CHEBI:18420"/>
    </ligand>
</feature>
<feature type="binding site" evidence="1">
    <location>
        <position position="15"/>
    </location>
    <ligand>
        <name>ATP</name>
        <dbReference type="ChEBI" id="CHEBI:30616"/>
    </ligand>
</feature>
<feature type="binding site" evidence="1">
    <location>
        <position position="86"/>
    </location>
    <ligand>
        <name>substrate</name>
    </ligand>
</feature>
<feature type="binding site" evidence="1">
    <location>
        <begin position="201"/>
        <end position="205"/>
    </location>
    <ligand>
        <name>ATP</name>
        <dbReference type="ChEBI" id="CHEBI:30616"/>
    </ligand>
</feature>
<feature type="binding site" evidence="1">
    <location>
        <begin position="276"/>
        <end position="278"/>
    </location>
    <ligand>
        <name>ATP</name>
        <dbReference type="ChEBI" id="CHEBI:30616"/>
    </ligand>
</feature>
<feature type="binding site" evidence="1">
    <location>
        <begin position="324"/>
        <end position="328"/>
    </location>
    <ligand>
        <name>ATP</name>
        <dbReference type="ChEBI" id="CHEBI:30616"/>
    </ligand>
</feature>
<feature type="binding site" evidence="1">
    <location>
        <position position="378"/>
    </location>
    <ligand>
        <name>Mg(2+)</name>
        <dbReference type="ChEBI" id="CHEBI:18420"/>
    </ligand>
</feature>
<feature type="site" description="Transition state stabilizer" evidence="1">
    <location>
        <position position="175"/>
    </location>
</feature>
<feature type="site" description="Transition state stabilizer" evidence="1">
    <location>
        <position position="234"/>
    </location>
</feature>
<reference key="1">
    <citation type="journal article" date="2007" name="Nat. Biotechnol.">
        <title>Genome sequence and identification of candidate vaccine antigens from the animal pathogen Dichelobacter nodosus.</title>
        <authorList>
            <person name="Myers G.S.A."/>
            <person name="Parker D."/>
            <person name="Al-Hasani K."/>
            <person name="Kennan R.M."/>
            <person name="Seemann T."/>
            <person name="Ren Q."/>
            <person name="Badger J.H."/>
            <person name="Selengut J.D."/>
            <person name="Deboy R.T."/>
            <person name="Tettelin H."/>
            <person name="Boyce J.D."/>
            <person name="McCarl V.P."/>
            <person name="Han X."/>
            <person name="Nelson W.C."/>
            <person name="Madupu R."/>
            <person name="Mohamoud Y."/>
            <person name="Holley T."/>
            <person name="Fedorova N."/>
            <person name="Khouri H."/>
            <person name="Bottomley S.P."/>
            <person name="Whittington R.J."/>
            <person name="Adler B."/>
            <person name="Songer J.G."/>
            <person name="Rood J.I."/>
            <person name="Paulsen I.T."/>
        </authorList>
    </citation>
    <scope>NUCLEOTIDE SEQUENCE [LARGE SCALE GENOMIC DNA]</scope>
    <source>
        <strain>VCS1703A</strain>
    </source>
</reference>
<sequence length="394" mass="42941">MQFVLVLNCGSSSLKFAVMNPTSGDVLLNGTAERLGHDVGSLTVKDESGKAVQEIKPGTHAQALELIVETLKTKNLMDKIAAVGHRLVHGGEFFKESVVINNEVREKVAECIRLAPLHNPANITGIEAALKVFPKLPQVGVFDTAFHQQMPEKAYLYPLPRKFYEEFHIRRYGFHGTSFRYIASQLESVTGLKNPRTVVCHLGNGGSLAAIKDGHSVDTTMGLTPLEGIVHGTRCGDIDPAIIQILQKQFHISATEMNEILWKKSGLLGLSGISNDCRSLEEAMAEGNEAAIRALEVYCYRLAKHIAAQMVALNGCDALVFTGGIGENSAFVRANTMEQLAFLGFELDKKANEETSRGKQGKISTANSKPVWVIPTNEELLIARDTAQLSGMTR</sequence>